<dbReference type="EC" id="2.1.1.61" evidence="1"/>
<dbReference type="EC" id="1.5.-.-" evidence="1"/>
<dbReference type="EMBL" id="CP000768">
    <property type="protein sequence ID" value="ABS43848.1"/>
    <property type="molecule type" value="Genomic_DNA"/>
</dbReference>
<dbReference type="SMR" id="A7H2B2"/>
<dbReference type="KEGG" id="cjd:JJD26997_0457"/>
<dbReference type="HOGENOM" id="CLU_022427_2_1_7"/>
<dbReference type="Proteomes" id="UP000002302">
    <property type="component" value="Chromosome"/>
</dbReference>
<dbReference type="GO" id="GO:0005737">
    <property type="term" value="C:cytoplasm"/>
    <property type="evidence" value="ECO:0007669"/>
    <property type="project" value="UniProtKB-SubCell"/>
</dbReference>
<dbReference type="GO" id="GO:0016645">
    <property type="term" value="F:oxidoreductase activity, acting on the CH-NH group of donors"/>
    <property type="evidence" value="ECO:0007669"/>
    <property type="project" value="InterPro"/>
</dbReference>
<dbReference type="GO" id="GO:0004808">
    <property type="term" value="F:tRNA (5-methylaminomethyl-2-thiouridylate)(34)-methyltransferase activity"/>
    <property type="evidence" value="ECO:0007669"/>
    <property type="project" value="UniProtKB-EC"/>
</dbReference>
<dbReference type="GO" id="GO:0032259">
    <property type="term" value="P:methylation"/>
    <property type="evidence" value="ECO:0007669"/>
    <property type="project" value="UniProtKB-KW"/>
</dbReference>
<dbReference type="GO" id="GO:0008033">
    <property type="term" value="P:tRNA processing"/>
    <property type="evidence" value="ECO:0007669"/>
    <property type="project" value="UniProtKB-KW"/>
</dbReference>
<dbReference type="Gene3D" id="3.30.9.10">
    <property type="entry name" value="D-Amino Acid Oxidase, subunit A, domain 2"/>
    <property type="match status" value="1"/>
</dbReference>
<dbReference type="Gene3D" id="3.50.50.60">
    <property type="entry name" value="FAD/NAD(P)-binding domain"/>
    <property type="match status" value="1"/>
</dbReference>
<dbReference type="Gene3D" id="3.40.50.150">
    <property type="entry name" value="Vaccinia Virus protein VP39"/>
    <property type="match status" value="1"/>
</dbReference>
<dbReference type="HAMAP" id="MF_01102">
    <property type="entry name" value="MnmC"/>
    <property type="match status" value="1"/>
</dbReference>
<dbReference type="InterPro" id="IPR006076">
    <property type="entry name" value="FAD-dep_OxRdtase"/>
</dbReference>
<dbReference type="InterPro" id="IPR036188">
    <property type="entry name" value="FAD/NAD-bd_sf"/>
</dbReference>
<dbReference type="InterPro" id="IPR008471">
    <property type="entry name" value="MnmC-like_methylTransf"/>
</dbReference>
<dbReference type="InterPro" id="IPR029063">
    <property type="entry name" value="SAM-dependent_MTases_sf"/>
</dbReference>
<dbReference type="InterPro" id="IPR023032">
    <property type="entry name" value="tRNA_MAMT_biosynth_bifunc_MnmC"/>
</dbReference>
<dbReference type="InterPro" id="IPR047785">
    <property type="entry name" value="tRNA_MNMC2"/>
</dbReference>
<dbReference type="InterPro" id="IPR017610">
    <property type="entry name" value="tRNA_S-uridine_synth_MnmC_C"/>
</dbReference>
<dbReference type="NCBIfam" id="TIGR03197">
    <property type="entry name" value="MnmC_Cterm"/>
    <property type="match status" value="1"/>
</dbReference>
<dbReference type="NCBIfam" id="NF002481">
    <property type="entry name" value="PRK01747.1-2"/>
    <property type="match status" value="1"/>
</dbReference>
<dbReference type="NCBIfam" id="NF033855">
    <property type="entry name" value="tRNA_MNMC2"/>
    <property type="match status" value="1"/>
</dbReference>
<dbReference type="PANTHER" id="PTHR13847">
    <property type="entry name" value="SARCOSINE DEHYDROGENASE-RELATED"/>
    <property type="match status" value="1"/>
</dbReference>
<dbReference type="PANTHER" id="PTHR13847:SF283">
    <property type="entry name" value="TRNA 5-METHYLAMINOMETHYL-2-THIOURIDINE BIOSYNTHESIS BIFUNCTIONAL PROTEIN MNMC"/>
    <property type="match status" value="1"/>
</dbReference>
<dbReference type="Pfam" id="PF01266">
    <property type="entry name" value="DAO"/>
    <property type="match status" value="1"/>
</dbReference>
<dbReference type="Pfam" id="PF05430">
    <property type="entry name" value="Methyltransf_30"/>
    <property type="match status" value="1"/>
</dbReference>
<dbReference type="SUPFAM" id="SSF51905">
    <property type="entry name" value="FAD/NAD(P)-binding domain"/>
    <property type="match status" value="1"/>
</dbReference>
<evidence type="ECO:0000255" key="1">
    <source>
        <dbReference type="HAMAP-Rule" id="MF_01102"/>
    </source>
</evidence>
<accession>A7H2B2</accession>
<sequence length="613" mass="71760">MKKAKLIFKDNTPFSLDFDDFYFNSKDGLNESKFVYTHSFEWKNQENFIITESGFGIGLNFFLTLKRFLETTPSKRPKKLFYISVEAFYIEKEQLREIYQKLRFYEEFKELLEHFLKFYPKAKEGIYRFYFEDCFLDLVFEDITILKELDFKADVWYLDGFSPNKNSQMFDENLIFEVARLSKKNTQICTFSSASFLQKNLKKYGFRVEKTKGFRKREMIKAYLENELEFKDKEAYFSRTFSSLKNKKVAIIGAGISSAVLAYELSLRGFKIDVFEKHLELGKGASGNESGILSSLILKSKVKLGEFSELSFIEASRFYRQILDLNFKGVVEFAHNDLMQERFDTQRENVLFKISKNQAFLEEGGVIFPKNLVKNLFEKSKACIYFNHEFQAYKFENECFTLKFKNDIVKSDYAVLIYAMGADTKDFVFYDEMKLSKVRGQVTHLKPFLDTQFPLSSKAYICPIKDDLQVIGASYDRLDASLESKEEDDKQNIENIAEFIDKNTKLEIIGSKVGFRSYSSDRFMIVGNAYDEAFYKEEYKALLWTKDKEQKPAKMSCNLYFNFAHGSRGFSTSVLAARYLCALINNEPLCLEKKYIHAIHPARFLVRKLKKGL</sequence>
<comment type="function">
    <text evidence="1">Catalyzes the last two steps in the biosynthesis of 5-methylaminomethyl-2-thiouridine (mnm(5)s(2)U) at the wobble position (U34) in tRNA. Catalyzes the FAD-dependent demodification of cmnm(5)s(2)U34 to nm(5)s(2)U34, followed by the transfer of a methyl group from S-adenosyl-L-methionine to nm(5)s(2)U34, to form mnm(5)s(2)U34.</text>
</comment>
<comment type="catalytic activity">
    <reaction evidence="1">
        <text>5-aminomethyl-2-thiouridine(34) in tRNA + S-adenosyl-L-methionine = 5-methylaminomethyl-2-thiouridine(34) in tRNA + S-adenosyl-L-homocysteine + H(+)</text>
        <dbReference type="Rhea" id="RHEA:19569"/>
        <dbReference type="Rhea" id="RHEA-COMP:10195"/>
        <dbReference type="Rhea" id="RHEA-COMP:10197"/>
        <dbReference type="ChEBI" id="CHEBI:15378"/>
        <dbReference type="ChEBI" id="CHEBI:57856"/>
        <dbReference type="ChEBI" id="CHEBI:59789"/>
        <dbReference type="ChEBI" id="CHEBI:74454"/>
        <dbReference type="ChEBI" id="CHEBI:74455"/>
        <dbReference type="EC" id="2.1.1.61"/>
    </reaction>
</comment>
<comment type="cofactor">
    <cofactor evidence="1">
        <name>FAD</name>
        <dbReference type="ChEBI" id="CHEBI:57692"/>
    </cofactor>
</comment>
<comment type="subcellular location">
    <subcellularLocation>
        <location evidence="1">Cytoplasm</location>
    </subcellularLocation>
</comment>
<comment type="similarity">
    <text evidence="1">In the N-terminal section; belongs to the methyltransferase superfamily. tRNA (mnm(5)s(2)U34)-methyltransferase family.</text>
</comment>
<comment type="similarity">
    <text evidence="1">In the C-terminal section; belongs to the DAO family.</text>
</comment>
<feature type="chain" id="PRO_0000347971" description="tRNA 5-methylaminomethyl-2-thiouridine biosynthesis bifunctional protein MnmC">
    <location>
        <begin position="1"/>
        <end position="613"/>
    </location>
</feature>
<feature type="region of interest" description="tRNA (mnm(5)s(2)U34)-methyltransferase">
    <location>
        <begin position="1"/>
        <end position="225"/>
    </location>
</feature>
<feature type="region of interest" description="FAD-dependent cmnm(5)s(2)U34 oxidoreductase">
    <location>
        <begin position="252"/>
        <end position="613"/>
    </location>
</feature>
<protein>
    <recommendedName>
        <fullName evidence="1">tRNA 5-methylaminomethyl-2-thiouridine biosynthesis bifunctional protein MnmC</fullName>
        <shortName evidence="1">tRNA mnm(5)s(2)U biosynthesis bifunctional protein</shortName>
    </recommendedName>
    <domain>
        <recommendedName>
            <fullName evidence="1">tRNA (mnm(5)s(2)U34)-methyltransferase</fullName>
            <ecNumber evidence="1">2.1.1.61</ecNumber>
        </recommendedName>
    </domain>
    <domain>
        <recommendedName>
            <fullName evidence="1">FAD-dependent cmnm(5)s(2)U34 oxidoreductase</fullName>
            <ecNumber evidence="1">1.5.-.-</ecNumber>
        </recommendedName>
    </domain>
</protein>
<organism>
    <name type="scientific">Campylobacter jejuni subsp. doylei (strain ATCC BAA-1458 / RM4099 / 269.97)</name>
    <dbReference type="NCBI Taxonomy" id="360109"/>
    <lineage>
        <taxon>Bacteria</taxon>
        <taxon>Pseudomonadati</taxon>
        <taxon>Campylobacterota</taxon>
        <taxon>Epsilonproteobacteria</taxon>
        <taxon>Campylobacterales</taxon>
        <taxon>Campylobacteraceae</taxon>
        <taxon>Campylobacter</taxon>
    </lineage>
</organism>
<keyword id="KW-0963">Cytoplasm</keyword>
<keyword id="KW-0274">FAD</keyword>
<keyword id="KW-0285">Flavoprotein</keyword>
<keyword id="KW-0489">Methyltransferase</keyword>
<keyword id="KW-0511">Multifunctional enzyme</keyword>
<keyword id="KW-0560">Oxidoreductase</keyword>
<keyword id="KW-0949">S-adenosyl-L-methionine</keyword>
<keyword id="KW-0808">Transferase</keyword>
<keyword id="KW-0819">tRNA processing</keyword>
<name>MNMC_CAMJD</name>
<proteinExistence type="inferred from homology"/>
<gene>
    <name evidence="1" type="primary">mnmC</name>
    <name type="ordered locus">JJD26997_0457</name>
</gene>
<reference key="1">
    <citation type="submission" date="2007-07" db="EMBL/GenBank/DDBJ databases">
        <title>Complete genome sequence of Campylobacter jejuni subsp doylei 269.97 isolated from human blood.</title>
        <authorList>
            <person name="Fouts D.E."/>
            <person name="Mongodin E.F."/>
            <person name="Puiu D."/>
            <person name="Sebastian Y."/>
            <person name="Miller W.G."/>
            <person name="Mandrell R.E."/>
            <person name="Lastovica A.J."/>
            <person name="Nelson K.E."/>
        </authorList>
    </citation>
    <scope>NUCLEOTIDE SEQUENCE [LARGE SCALE GENOMIC DNA]</scope>
    <source>
        <strain>ATCC BAA-1458 / RM4099 / 269.97</strain>
    </source>
</reference>